<reference key="1">
    <citation type="journal article" date="2007" name="PLoS Genet.">
        <title>Genome analysis of Minibacterium massiliensis highlights the convergent evolution of water-living bacteria.</title>
        <authorList>
            <person name="Audic S."/>
            <person name="Robert C."/>
            <person name="Campagna B."/>
            <person name="Parinello H."/>
            <person name="Claverie J.-M."/>
            <person name="Raoult D."/>
            <person name="Drancourt M."/>
        </authorList>
    </citation>
    <scope>NUCLEOTIDE SEQUENCE [LARGE SCALE GENOMIC DNA]</scope>
    <source>
        <strain>Marseille</strain>
    </source>
</reference>
<keyword id="KW-0030">Aminoacyl-tRNA synthetase</keyword>
<keyword id="KW-0067">ATP-binding</keyword>
<keyword id="KW-0963">Cytoplasm</keyword>
<keyword id="KW-0436">Ligase</keyword>
<keyword id="KW-0460">Magnesium</keyword>
<keyword id="KW-0479">Metal-binding</keyword>
<keyword id="KW-0547">Nucleotide-binding</keyword>
<keyword id="KW-0648">Protein biosynthesis</keyword>
<evidence type="ECO:0000255" key="1">
    <source>
        <dbReference type="HAMAP-Rule" id="MF_00281"/>
    </source>
</evidence>
<name>SYFA_JANMA</name>
<gene>
    <name evidence="1" type="primary">pheS</name>
    <name type="ordered locus">mma_1491</name>
</gene>
<protein>
    <recommendedName>
        <fullName evidence="1">Phenylalanine--tRNA ligase alpha subunit</fullName>
        <ecNumber evidence="1">6.1.1.20</ecNumber>
    </recommendedName>
    <alternativeName>
        <fullName evidence="1">Phenylalanyl-tRNA synthetase alpha subunit</fullName>
        <shortName evidence="1">PheRS</shortName>
    </alternativeName>
</protein>
<feature type="chain" id="PRO_1000059241" description="Phenylalanine--tRNA ligase alpha subunit">
    <location>
        <begin position="1"/>
        <end position="338"/>
    </location>
</feature>
<feature type="binding site" evidence="1">
    <location>
        <position position="259"/>
    </location>
    <ligand>
        <name>Mg(2+)</name>
        <dbReference type="ChEBI" id="CHEBI:18420"/>
        <note>shared with beta subunit</note>
    </ligand>
</feature>
<proteinExistence type="inferred from homology"/>
<accession>A6SY34</accession>
<dbReference type="EC" id="6.1.1.20" evidence="1"/>
<dbReference type="EMBL" id="CP000269">
    <property type="protein sequence ID" value="ABR88313.1"/>
    <property type="molecule type" value="Genomic_DNA"/>
</dbReference>
<dbReference type="RefSeq" id="WP_012079347.1">
    <property type="nucleotide sequence ID" value="NC_009659.1"/>
</dbReference>
<dbReference type="SMR" id="A6SY34"/>
<dbReference type="STRING" id="375286.mma_1491"/>
<dbReference type="KEGG" id="mms:mma_1491"/>
<dbReference type="eggNOG" id="COG0016">
    <property type="taxonomic scope" value="Bacteria"/>
</dbReference>
<dbReference type="HOGENOM" id="CLU_025086_0_1_4"/>
<dbReference type="OrthoDB" id="9800719at2"/>
<dbReference type="Proteomes" id="UP000006388">
    <property type="component" value="Chromosome"/>
</dbReference>
<dbReference type="GO" id="GO:0005737">
    <property type="term" value="C:cytoplasm"/>
    <property type="evidence" value="ECO:0007669"/>
    <property type="project" value="UniProtKB-SubCell"/>
</dbReference>
<dbReference type="GO" id="GO:0005524">
    <property type="term" value="F:ATP binding"/>
    <property type="evidence" value="ECO:0007669"/>
    <property type="project" value="UniProtKB-UniRule"/>
</dbReference>
<dbReference type="GO" id="GO:0000287">
    <property type="term" value="F:magnesium ion binding"/>
    <property type="evidence" value="ECO:0007669"/>
    <property type="project" value="UniProtKB-UniRule"/>
</dbReference>
<dbReference type="GO" id="GO:0004826">
    <property type="term" value="F:phenylalanine-tRNA ligase activity"/>
    <property type="evidence" value="ECO:0007669"/>
    <property type="project" value="UniProtKB-UniRule"/>
</dbReference>
<dbReference type="GO" id="GO:0000049">
    <property type="term" value="F:tRNA binding"/>
    <property type="evidence" value="ECO:0007669"/>
    <property type="project" value="InterPro"/>
</dbReference>
<dbReference type="GO" id="GO:0006432">
    <property type="term" value="P:phenylalanyl-tRNA aminoacylation"/>
    <property type="evidence" value="ECO:0007669"/>
    <property type="project" value="UniProtKB-UniRule"/>
</dbReference>
<dbReference type="CDD" id="cd00496">
    <property type="entry name" value="PheRS_alpha_core"/>
    <property type="match status" value="1"/>
</dbReference>
<dbReference type="FunFam" id="3.30.930.10:FF:000003">
    <property type="entry name" value="Phenylalanine--tRNA ligase alpha subunit"/>
    <property type="match status" value="1"/>
</dbReference>
<dbReference type="Gene3D" id="3.30.930.10">
    <property type="entry name" value="Bira Bifunctional Protein, Domain 2"/>
    <property type="match status" value="1"/>
</dbReference>
<dbReference type="HAMAP" id="MF_00281">
    <property type="entry name" value="Phe_tRNA_synth_alpha1"/>
    <property type="match status" value="1"/>
</dbReference>
<dbReference type="InterPro" id="IPR006195">
    <property type="entry name" value="aa-tRNA-synth_II"/>
</dbReference>
<dbReference type="InterPro" id="IPR045864">
    <property type="entry name" value="aa-tRNA-synth_II/BPL/LPL"/>
</dbReference>
<dbReference type="InterPro" id="IPR004529">
    <property type="entry name" value="Phe-tRNA-synth_IIc_asu"/>
</dbReference>
<dbReference type="InterPro" id="IPR004188">
    <property type="entry name" value="Phe-tRNA_ligase_II_N"/>
</dbReference>
<dbReference type="InterPro" id="IPR022911">
    <property type="entry name" value="Phe_tRNA_ligase_alpha1_bac"/>
</dbReference>
<dbReference type="InterPro" id="IPR002319">
    <property type="entry name" value="Phenylalanyl-tRNA_Synthase"/>
</dbReference>
<dbReference type="InterPro" id="IPR010978">
    <property type="entry name" value="tRNA-bd_arm"/>
</dbReference>
<dbReference type="NCBIfam" id="TIGR00468">
    <property type="entry name" value="pheS"/>
    <property type="match status" value="1"/>
</dbReference>
<dbReference type="PANTHER" id="PTHR11538:SF41">
    <property type="entry name" value="PHENYLALANINE--TRNA LIGASE, MITOCHONDRIAL"/>
    <property type="match status" value="1"/>
</dbReference>
<dbReference type="PANTHER" id="PTHR11538">
    <property type="entry name" value="PHENYLALANYL-TRNA SYNTHETASE"/>
    <property type="match status" value="1"/>
</dbReference>
<dbReference type="Pfam" id="PF02912">
    <property type="entry name" value="Phe_tRNA-synt_N"/>
    <property type="match status" value="1"/>
</dbReference>
<dbReference type="Pfam" id="PF01409">
    <property type="entry name" value="tRNA-synt_2d"/>
    <property type="match status" value="1"/>
</dbReference>
<dbReference type="SUPFAM" id="SSF55681">
    <property type="entry name" value="Class II aaRS and biotin synthetases"/>
    <property type="match status" value="1"/>
</dbReference>
<dbReference type="SUPFAM" id="SSF46589">
    <property type="entry name" value="tRNA-binding arm"/>
    <property type="match status" value="1"/>
</dbReference>
<dbReference type="PROSITE" id="PS50862">
    <property type="entry name" value="AA_TRNA_LIGASE_II"/>
    <property type="match status" value="1"/>
</dbReference>
<comment type="catalytic activity">
    <reaction evidence="1">
        <text>tRNA(Phe) + L-phenylalanine + ATP = L-phenylalanyl-tRNA(Phe) + AMP + diphosphate + H(+)</text>
        <dbReference type="Rhea" id="RHEA:19413"/>
        <dbReference type="Rhea" id="RHEA-COMP:9668"/>
        <dbReference type="Rhea" id="RHEA-COMP:9699"/>
        <dbReference type="ChEBI" id="CHEBI:15378"/>
        <dbReference type="ChEBI" id="CHEBI:30616"/>
        <dbReference type="ChEBI" id="CHEBI:33019"/>
        <dbReference type="ChEBI" id="CHEBI:58095"/>
        <dbReference type="ChEBI" id="CHEBI:78442"/>
        <dbReference type="ChEBI" id="CHEBI:78531"/>
        <dbReference type="ChEBI" id="CHEBI:456215"/>
        <dbReference type="EC" id="6.1.1.20"/>
    </reaction>
</comment>
<comment type="cofactor">
    <cofactor evidence="1">
        <name>Mg(2+)</name>
        <dbReference type="ChEBI" id="CHEBI:18420"/>
    </cofactor>
    <text evidence="1">Binds 2 magnesium ions per tetramer.</text>
</comment>
<comment type="subunit">
    <text evidence="1">Tetramer of two alpha and two beta subunits.</text>
</comment>
<comment type="subcellular location">
    <subcellularLocation>
        <location evidence="1">Cytoplasm</location>
    </subcellularLocation>
</comment>
<comment type="similarity">
    <text evidence="1">Belongs to the class-II aminoacyl-tRNA synthetase family. Phe-tRNA synthetase alpha subunit type 1 subfamily.</text>
</comment>
<organism>
    <name type="scientific">Janthinobacterium sp. (strain Marseille)</name>
    <name type="common">Minibacterium massiliensis</name>
    <dbReference type="NCBI Taxonomy" id="375286"/>
    <lineage>
        <taxon>Bacteria</taxon>
        <taxon>Pseudomonadati</taxon>
        <taxon>Pseudomonadota</taxon>
        <taxon>Betaproteobacteria</taxon>
        <taxon>Burkholderiales</taxon>
        <taxon>Oxalobacteraceae</taxon>
        <taxon>Janthinobacterium</taxon>
    </lineage>
</organism>
<sequence length="338" mass="37736">MNPLEQLVTQAQTDFAAAIDAAALENAKAKYLGKTGQITEQMKSLGKLAPEERKAQGAVINSAKEKIEAALTARRDALSNAQMEARLNAEAIDITLPGRGRGTGGIHPVMRSWQRVEEIFGSIGFDVADGPEIENDWTNFTALNSPENHPARSMQDTFYIEGKDTQGKPLLLRTHTSPMQVRYARMNKPPIKVIAPGRTYRVDSDATHSPMFHQVEGLWIDENISFADLKGVYLNFVKAFFETDDLQVRFRPSYFPFTEPSAEIDIAFGSGPLKGRWLEVSGAGQVHPTVLRNMGFDPEQFIGFAFGSGLERLTMLRYGINDLRLFYEGDLRFLKQFN</sequence>